<keyword id="KW-0106">Calcium</keyword>
<keyword id="KW-0176">Collagen</keyword>
<keyword id="KW-1015">Disulfide bond</keyword>
<keyword id="KW-0272">Extracellular matrix</keyword>
<keyword id="KW-0305">Gaseous exchange</keyword>
<keyword id="KW-0325">Glycoprotein</keyword>
<keyword id="KW-0379">Hydroxylation</keyword>
<keyword id="KW-0430">Lectin</keyword>
<keyword id="KW-0479">Metal-binding</keyword>
<keyword id="KW-1185">Reference proteome</keyword>
<keyword id="KW-0677">Repeat</keyword>
<keyword id="KW-0964">Secreted</keyword>
<keyword id="KW-0732">Signal</keyword>
<keyword id="KW-0767">Surface film</keyword>
<name>SFTPA_BOVIN</name>
<organism>
    <name type="scientific">Bos taurus</name>
    <name type="common">Bovine</name>
    <dbReference type="NCBI Taxonomy" id="9913"/>
    <lineage>
        <taxon>Eukaryota</taxon>
        <taxon>Metazoa</taxon>
        <taxon>Chordata</taxon>
        <taxon>Craniata</taxon>
        <taxon>Vertebrata</taxon>
        <taxon>Euteleostomi</taxon>
        <taxon>Mammalia</taxon>
        <taxon>Eutheria</taxon>
        <taxon>Laurasiatheria</taxon>
        <taxon>Artiodactyla</taxon>
        <taxon>Ruminantia</taxon>
        <taxon>Pecora</taxon>
        <taxon>Bovidae</taxon>
        <taxon>Bovinae</taxon>
        <taxon>Bos</taxon>
    </lineage>
</organism>
<proteinExistence type="evidence at transcript level"/>
<protein>
    <recommendedName>
        <fullName>Pulmonary surfactant-associated protein A</fullName>
        <shortName>PSAP</shortName>
        <shortName>PSP-A</shortName>
        <shortName>SP-A</shortName>
    </recommendedName>
</protein>
<feature type="signal peptide" evidence="4">
    <location>
        <begin position="1"/>
        <end position="20"/>
    </location>
</feature>
<feature type="chain" id="PRO_0000046688" description="Pulmonary surfactant-associated protein A">
    <location>
        <begin position="21"/>
        <end position="248"/>
    </location>
</feature>
<feature type="domain" description="Collagen-like">
    <location>
        <begin position="28"/>
        <end position="100"/>
    </location>
</feature>
<feature type="domain" description="C-type lectin" evidence="5">
    <location>
        <begin position="132"/>
        <end position="248"/>
    </location>
</feature>
<feature type="region of interest" description="Disordered" evidence="6">
    <location>
        <begin position="29"/>
        <end position="102"/>
    </location>
</feature>
<feature type="compositionally biased region" description="Basic and acidic residues" evidence="6">
    <location>
        <begin position="42"/>
        <end position="51"/>
    </location>
</feature>
<feature type="compositionally biased region" description="Pro residues" evidence="6">
    <location>
        <begin position="54"/>
        <end position="65"/>
    </location>
</feature>
<feature type="compositionally biased region" description="Low complexity" evidence="6">
    <location>
        <begin position="69"/>
        <end position="82"/>
    </location>
</feature>
<feature type="compositionally biased region" description="Basic and acidic residues" evidence="6">
    <location>
        <begin position="84"/>
        <end position="93"/>
    </location>
</feature>
<feature type="binding site" evidence="1">
    <location>
        <position position="215"/>
    </location>
    <ligand>
        <name>Ca(2+)</name>
        <dbReference type="ChEBI" id="CHEBI:29108"/>
    </ligand>
</feature>
<feature type="binding site" evidence="1">
    <location>
        <position position="217"/>
    </location>
    <ligand>
        <name>Ca(2+)</name>
        <dbReference type="ChEBI" id="CHEBI:29108"/>
    </ligand>
</feature>
<feature type="binding site" evidence="1">
    <location>
        <position position="234"/>
    </location>
    <ligand>
        <name>Ca(2+)</name>
        <dbReference type="ChEBI" id="CHEBI:29108"/>
    </ligand>
</feature>
<feature type="binding site" evidence="1">
    <location>
        <position position="235"/>
    </location>
    <ligand>
        <name>Ca(2+)</name>
        <dbReference type="ChEBI" id="CHEBI:29108"/>
    </ligand>
</feature>
<feature type="modified residue" description="4-hydroxyproline" evidence="1">
    <location>
        <position position="30"/>
    </location>
</feature>
<feature type="modified residue" description="4-hydroxyproline" evidence="1">
    <location>
        <position position="33"/>
    </location>
</feature>
<feature type="modified residue" description="4-hydroxyproline" evidence="1">
    <location>
        <position position="36"/>
    </location>
</feature>
<feature type="modified residue" description="4-hydroxyproline" evidence="1">
    <location>
        <position position="42"/>
    </location>
</feature>
<feature type="modified residue" description="4-hydroxyproline" evidence="1">
    <location>
        <position position="54"/>
    </location>
</feature>
<feature type="modified residue" description="4-hydroxyproline" evidence="1">
    <location>
        <position position="57"/>
    </location>
</feature>
<feature type="modified residue" description="4-hydroxyproline" evidence="1">
    <location>
        <position position="63"/>
    </location>
</feature>
<feature type="modified residue" description="4-hydroxyproline" evidence="1">
    <location>
        <position position="67"/>
    </location>
</feature>
<feature type="modified residue" description="4-hydroxyproline" evidence="1">
    <location>
        <position position="70"/>
    </location>
</feature>
<feature type="glycosylation site" description="N-linked (GlcNAc...) asparagine" evidence="4">
    <location>
        <position position="207"/>
    </location>
</feature>
<feature type="disulfide bond" description="Interchain" evidence="5">
    <location>
        <position position="26"/>
    </location>
</feature>
<feature type="disulfide bond" evidence="5">
    <location>
        <begin position="155"/>
        <end position="246"/>
    </location>
</feature>
<feature type="disulfide bond" evidence="5">
    <location>
        <begin position="224"/>
        <end position="238"/>
    </location>
</feature>
<feature type="sequence conflict" description="In Ref. 2; AAR27834." evidence="7" ref="2">
    <original>L</original>
    <variation>V</variation>
    <location>
        <position position="27"/>
    </location>
</feature>
<feature type="sequence conflict" description="In Ref. 2; AAR27834." evidence="7" ref="2">
    <original>EI</original>
    <variation>DF</variation>
    <location>
        <begin position="113"/>
        <end position="114"/>
    </location>
</feature>
<dbReference type="EMBL" id="BC123546">
    <property type="protein sequence ID" value="AAI23547.1"/>
    <property type="molecule type" value="mRNA"/>
</dbReference>
<dbReference type="EMBL" id="AY486457">
    <property type="protein sequence ID" value="AAR27834.1"/>
    <property type="molecule type" value="mRNA"/>
</dbReference>
<dbReference type="RefSeq" id="NP_001071306.2">
    <property type="nucleotide sequence ID" value="NM_001077838.2"/>
</dbReference>
<dbReference type="SMR" id="Q6RXL1"/>
<dbReference type="FunCoup" id="Q6RXL1">
    <property type="interactions" value="156"/>
</dbReference>
<dbReference type="STRING" id="9913.ENSBTAP00000072149"/>
<dbReference type="GlyCosmos" id="Q6RXL1">
    <property type="glycosylation" value="1 site, No reported glycans"/>
</dbReference>
<dbReference type="GlyGen" id="Q6RXL1">
    <property type="glycosylation" value="1 site"/>
</dbReference>
<dbReference type="PaxDb" id="9913-ENSBTAP00000054931"/>
<dbReference type="GeneID" id="407213"/>
<dbReference type="KEGG" id="bta:407213"/>
<dbReference type="CTD" id="653509"/>
<dbReference type="InParanoid" id="Q6RXL1"/>
<dbReference type="OrthoDB" id="7357196at2759"/>
<dbReference type="Proteomes" id="UP000009136">
    <property type="component" value="Unplaced"/>
</dbReference>
<dbReference type="GO" id="GO:0005581">
    <property type="term" value="C:collagen trimer"/>
    <property type="evidence" value="ECO:0007669"/>
    <property type="project" value="UniProtKB-KW"/>
</dbReference>
<dbReference type="GO" id="GO:0005615">
    <property type="term" value="C:extracellular space"/>
    <property type="evidence" value="ECO:0000318"/>
    <property type="project" value="GO_Central"/>
</dbReference>
<dbReference type="GO" id="GO:0005771">
    <property type="term" value="C:multivesicular body"/>
    <property type="evidence" value="ECO:0000318"/>
    <property type="project" value="GO_Central"/>
</dbReference>
<dbReference type="GO" id="GO:0030246">
    <property type="term" value="F:carbohydrate binding"/>
    <property type="evidence" value="ECO:0007669"/>
    <property type="project" value="UniProtKB-KW"/>
</dbReference>
<dbReference type="GO" id="GO:0046872">
    <property type="term" value="F:metal ion binding"/>
    <property type="evidence" value="ECO:0007669"/>
    <property type="project" value="UniProtKB-KW"/>
</dbReference>
<dbReference type="GO" id="GO:0007585">
    <property type="term" value="P:respiratory gaseous exchange by respiratory system"/>
    <property type="evidence" value="ECO:0007669"/>
    <property type="project" value="UniProtKB-KW"/>
</dbReference>
<dbReference type="CDD" id="cd03591">
    <property type="entry name" value="CLECT_collectin_like"/>
    <property type="match status" value="1"/>
</dbReference>
<dbReference type="FunFam" id="3.10.100.10:FF:000056">
    <property type="entry name" value="Pulmonary surfactant-associated protein A"/>
    <property type="match status" value="1"/>
</dbReference>
<dbReference type="Gene3D" id="3.10.100.10">
    <property type="entry name" value="Mannose-Binding Protein A, subunit A"/>
    <property type="match status" value="1"/>
</dbReference>
<dbReference type="InterPro" id="IPR001304">
    <property type="entry name" value="C-type_lectin-like"/>
</dbReference>
<dbReference type="InterPro" id="IPR016186">
    <property type="entry name" value="C-type_lectin-like/link_sf"/>
</dbReference>
<dbReference type="InterPro" id="IPR018378">
    <property type="entry name" value="C-type_lectin_CS"/>
</dbReference>
<dbReference type="InterPro" id="IPR051077">
    <property type="entry name" value="Ca-dependent_lectin"/>
</dbReference>
<dbReference type="InterPro" id="IPR033990">
    <property type="entry name" value="Collectin_CTLD"/>
</dbReference>
<dbReference type="InterPro" id="IPR016187">
    <property type="entry name" value="CTDL_fold"/>
</dbReference>
<dbReference type="PANTHER" id="PTHR24024">
    <property type="entry name" value="PULMONARY SURFACTANT-ASSOCIATED PROTEIN A"/>
    <property type="match status" value="1"/>
</dbReference>
<dbReference type="PANTHER" id="PTHR24024:SF13">
    <property type="entry name" value="PULMONARY SURFACTANT-ASSOCIATED PROTEIN A1"/>
    <property type="match status" value="1"/>
</dbReference>
<dbReference type="Pfam" id="PF00059">
    <property type="entry name" value="Lectin_C"/>
    <property type="match status" value="1"/>
</dbReference>
<dbReference type="SMART" id="SM00034">
    <property type="entry name" value="CLECT"/>
    <property type="match status" value="1"/>
</dbReference>
<dbReference type="SUPFAM" id="SSF56436">
    <property type="entry name" value="C-type lectin-like"/>
    <property type="match status" value="1"/>
</dbReference>
<dbReference type="SUPFAM" id="SSF57944">
    <property type="entry name" value="Triple coiled coil domain of C-type lectins"/>
    <property type="match status" value="1"/>
</dbReference>
<dbReference type="PROSITE" id="PS00615">
    <property type="entry name" value="C_TYPE_LECTIN_1"/>
    <property type="match status" value="1"/>
</dbReference>
<dbReference type="PROSITE" id="PS50041">
    <property type="entry name" value="C_TYPE_LECTIN_2"/>
    <property type="match status" value="1"/>
</dbReference>
<evidence type="ECO:0000250" key="1"/>
<evidence type="ECO:0000250" key="2">
    <source>
        <dbReference type="UniProtKB" id="P35242"/>
    </source>
</evidence>
<evidence type="ECO:0000250" key="3">
    <source>
        <dbReference type="UniProtKB" id="Q8IWL2"/>
    </source>
</evidence>
<evidence type="ECO:0000255" key="4"/>
<evidence type="ECO:0000255" key="5">
    <source>
        <dbReference type="PROSITE-ProRule" id="PRU00040"/>
    </source>
</evidence>
<evidence type="ECO:0000256" key="6">
    <source>
        <dbReference type="SAM" id="MobiDB-lite"/>
    </source>
</evidence>
<evidence type="ECO:0000305" key="7"/>
<comment type="function">
    <text evidence="2">In presence of calcium ions, it binds to surfactant phospholipids and contributes to lower the surface tension at the air-liquid interface in the alveoli of the mammalian lung and is essential for normal respiration. Enhances the expression of MYO18A/SP-R210 on alveolar macrophages.</text>
</comment>
<comment type="subunit">
    <text evidence="3">Oligomeric complex of 6 set of homotrimers.</text>
</comment>
<comment type="subcellular location">
    <subcellularLocation>
        <location evidence="3">Secreted</location>
    </subcellularLocation>
    <subcellularLocation>
        <location evidence="3">Secreted</location>
        <location evidence="3">Extracellular space</location>
        <location evidence="3">Extracellular matrix</location>
    </subcellularLocation>
    <subcellularLocation>
        <location evidence="3">Secreted</location>
        <location evidence="3">Extracellular space</location>
        <location evidence="3">Surface film</location>
    </subcellularLocation>
</comment>
<comment type="miscellaneous">
    <text>Pulmonary surfactant consists of 90% lipid and 10% protein. There are 4 surfactant-associated proteins: 2 collagenous, carbohydrate-binding glycoproteins (SP-A and SP-D) and 2 small hydrophobic proteins (SP-B and SP-C).</text>
</comment>
<comment type="similarity">
    <text evidence="7">Belongs to the SFTPA family.</text>
</comment>
<accession>Q6RXL1</accession>
<accession>Q08DV8</accession>
<gene>
    <name type="primary">SFTPA1</name>
    <name type="synonym">SFTPA</name>
</gene>
<reference key="1">
    <citation type="submission" date="2006-09" db="EMBL/GenBank/DDBJ databases">
        <authorList>
            <consortium name="NIH - Mammalian Gene Collection (MGC) project"/>
        </authorList>
    </citation>
    <scope>NUCLEOTIDE SEQUENCE [LARGE SCALE MRNA]</scope>
    <source>
        <strain>Hereford</strain>
        <tissue>Fetal lung</tissue>
    </source>
</reference>
<reference key="2">
    <citation type="submission" date="2003-11" db="EMBL/GenBank/DDBJ databases">
        <title>Gene expression in nuclear transfer bovine.</title>
        <authorList>
            <person name="Li S."/>
            <person name="Li N."/>
        </authorList>
    </citation>
    <scope>NUCLEOTIDE SEQUENCE [MRNA] OF 25-116</scope>
</reference>
<sequence>MLLCSLTLTLLWMVASGLECDVKEVCLGSPGIPGTPGSHGLPGRDGRDGIKGDPGPPGPMGPPGGMPGLPGRDGMTGAPGLPGERGEKGEPGERGPPGFPAYLDEELQGTLHEIRHQVLQSQGVLRLQGSVLAVGEKVFSTNGQSVNFDAIKELCARVGGHIAAPRSPEENEAIVSIVKKYNTYAYLGLVEGPTAGDFYYLDGAPVNYTNWYPGEPRGRGKEKCVEIYTDGQWNDKNCLQYRLAICEF</sequence>